<gene>
    <name type="primary">smp3</name>
    <name type="ORF">AO090009000654</name>
</gene>
<sequence length="543" mass="60694">MWRRTYLLLLVIRVYFALSPSYLHPDENFQGPEVFAGRVLSYPSKLPWEFTADKPIRSVFPLWPIYDVPISLLKWFYAETGAPTPPPPQVIYYVLRGVMFLLGFVLEDWAVYELVPFARHRRATVVLVASSYVTWTYQTHTFSNSLETLLVAWGLVLIRRIVVNKRRSSVFSCAVLAFIAVAGVFNRITFPAFLAIPGLQLLPHFRRKSVSPPVSLFSFVGFGIFFFGIAVLVDTAFYRPSATLWDALHSPIITPINNLLYNSDSSNLALHGLHPHYQHFLVNLPQLLGPAYAMMAISLWGLPVIPTWLKNARAVSALSATVILSIFPHQEPRFLIPCVPLLLSCFRVSKSRLFLAVWMIFNAALGFLMGIYHQGGVVPAQLAMPSIISASSVESNDALPGEIPVVSATVFWWKTYSPPLWLLGTNDNSSLNIETRDLMGVPGPNLIEELEKLLPPCNVAGSKQAGSVFVVAPKSAAFLDRYTFLPSSSSVSSALELHELWSYRKHINLDDLDFGTEGVYPTLRRVIGRRGLAVWRAKRAGCN</sequence>
<keyword id="KW-0256">Endoplasmic reticulum</keyword>
<keyword id="KW-0325">Glycoprotein</keyword>
<keyword id="KW-0328">Glycosyltransferase</keyword>
<keyword id="KW-0337">GPI-anchor biosynthesis</keyword>
<keyword id="KW-0472">Membrane</keyword>
<keyword id="KW-1185">Reference proteome</keyword>
<keyword id="KW-0808">Transferase</keyword>
<keyword id="KW-0812">Transmembrane</keyword>
<keyword id="KW-1133">Transmembrane helix</keyword>
<evidence type="ECO:0000250" key="1"/>
<evidence type="ECO:0000255" key="2"/>
<evidence type="ECO:0000305" key="3"/>
<dbReference type="EC" id="2.4.1.-"/>
<dbReference type="EMBL" id="BA000049">
    <property type="protein sequence ID" value="BAE55075.1"/>
    <property type="molecule type" value="Genomic_DNA"/>
</dbReference>
<dbReference type="STRING" id="510516.Q2UTP0"/>
<dbReference type="CAZy" id="GT22">
    <property type="family name" value="Glycosyltransferase Family 22"/>
</dbReference>
<dbReference type="GlyCosmos" id="Q2UTP0">
    <property type="glycosylation" value="1 site, No reported glycans"/>
</dbReference>
<dbReference type="EnsemblFungi" id="BAE55075">
    <property type="protein sequence ID" value="BAE55075"/>
    <property type="gene ID" value="AO090009000654"/>
</dbReference>
<dbReference type="HOGENOM" id="CLU_022957_2_0_1"/>
<dbReference type="OMA" id="HGIHPRY"/>
<dbReference type="UniPathway" id="UPA00196"/>
<dbReference type="Proteomes" id="UP000006564">
    <property type="component" value="Chromosome 1"/>
</dbReference>
<dbReference type="GO" id="GO:0005789">
    <property type="term" value="C:endoplasmic reticulum membrane"/>
    <property type="evidence" value="ECO:0007669"/>
    <property type="project" value="UniProtKB-SubCell"/>
</dbReference>
<dbReference type="GO" id="GO:0000026">
    <property type="term" value="F:alpha-1,2-mannosyltransferase activity"/>
    <property type="evidence" value="ECO:0007669"/>
    <property type="project" value="TreeGrafter"/>
</dbReference>
<dbReference type="GO" id="GO:0006506">
    <property type="term" value="P:GPI anchor biosynthetic process"/>
    <property type="evidence" value="ECO:0007669"/>
    <property type="project" value="UniProtKB-UniPathway"/>
</dbReference>
<dbReference type="InterPro" id="IPR005599">
    <property type="entry name" value="GPI_mannosylTrfase"/>
</dbReference>
<dbReference type="PANTHER" id="PTHR22760">
    <property type="entry name" value="GLYCOSYLTRANSFERASE"/>
    <property type="match status" value="1"/>
</dbReference>
<dbReference type="PANTHER" id="PTHR22760:SF3">
    <property type="entry name" value="GPI MANNOSYLTRANSFERASE 4"/>
    <property type="match status" value="1"/>
</dbReference>
<dbReference type="Pfam" id="PF03901">
    <property type="entry name" value="Glyco_transf_22"/>
    <property type="match status" value="1"/>
</dbReference>
<feature type="chain" id="PRO_0000246273" description="GPI mannosyltransferase 4">
    <location>
        <begin position="1"/>
        <end position="543"/>
    </location>
</feature>
<feature type="transmembrane region" description="Helical" evidence="2">
    <location>
        <begin position="5"/>
        <end position="25"/>
    </location>
</feature>
<feature type="transmembrane region" description="Helical" evidence="2">
    <location>
        <begin position="98"/>
        <end position="118"/>
    </location>
</feature>
<feature type="transmembrane region" description="Helical" evidence="2">
    <location>
        <begin position="176"/>
        <end position="196"/>
    </location>
</feature>
<feature type="transmembrane region" description="Helical" evidence="2">
    <location>
        <begin position="213"/>
        <end position="233"/>
    </location>
</feature>
<feature type="transmembrane region" description="Helical" evidence="2">
    <location>
        <begin position="353"/>
        <end position="373"/>
    </location>
</feature>
<feature type="glycosylation site" description="N-linked (GlcNAc...) asparagine" evidence="2">
    <location>
        <position position="428"/>
    </location>
</feature>
<organism>
    <name type="scientific">Aspergillus oryzae (strain ATCC 42149 / RIB 40)</name>
    <name type="common">Yellow koji mold</name>
    <dbReference type="NCBI Taxonomy" id="510516"/>
    <lineage>
        <taxon>Eukaryota</taxon>
        <taxon>Fungi</taxon>
        <taxon>Dikarya</taxon>
        <taxon>Ascomycota</taxon>
        <taxon>Pezizomycotina</taxon>
        <taxon>Eurotiomycetes</taxon>
        <taxon>Eurotiomycetidae</taxon>
        <taxon>Eurotiales</taxon>
        <taxon>Aspergillaceae</taxon>
        <taxon>Aspergillus</taxon>
        <taxon>Aspergillus subgen. Circumdati</taxon>
    </lineage>
</organism>
<proteinExistence type="inferred from homology"/>
<reference key="1">
    <citation type="journal article" date="2005" name="Nature">
        <title>Genome sequencing and analysis of Aspergillus oryzae.</title>
        <authorList>
            <person name="Machida M."/>
            <person name="Asai K."/>
            <person name="Sano M."/>
            <person name="Tanaka T."/>
            <person name="Kumagai T."/>
            <person name="Terai G."/>
            <person name="Kusumoto K."/>
            <person name="Arima T."/>
            <person name="Akita O."/>
            <person name="Kashiwagi Y."/>
            <person name="Abe K."/>
            <person name="Gomi K."/>
            <person name="Horiuchi H."/>
            <person name="Kitamoto K."/>
            <person name="Kobayashi T."/>
            <person name="Takeuchi M."/>
            <person name="Denning D.W."/>
            <person name="Galagan J.E."/>
            <person name="Nierman W.C."/>
            <person name="Yu J."/>
            <person name="Archer D.B."/>
            <person name="Bennett J.W."/>
            <person name="Bhatnagar D."/>
            <person name="Cleveland T.E."/>
            <person name="Fedorova N.D."/>
            <person name="Gotoh O."/>
            <person name="Horikawa H."/>
            <person name="Hosoyama A."/>
            <person name="Ichinomiya M."/>
            <person name="Igarashi R."/>
            <person name="Iwashita K."/>
            <person name="Juvvadi P.R."/>
            <person name="Kato M."/>
            <person name="Kato Y."/>
            <person name="Kin T."/>
            <person name="Kokubun A."/>
            <person name="Maeda H."/>
            <person name="Maeyama N."/>
            <person name="Maruyama J."/>
            <person name="Nagasaki H."/>
            <person name="Nakajima T."/>
            <person name="Oda K."/>
            <person name="Okada K."/>
            <person name="Paulsen I."/>
            <person name="Sakamoto K."/>
            <person name="Sawano T."/>
            <person name="Takahashi M."/>
            <person name="Takase K."/>
            <person name="Terabayashi Y."/>
            <person name="Wortman J.R."/>
            <person name="Yamada O."/>
            <person name="Yamagata Y."/>
            <person name="Anazawa H."/>
            <person name="Hata Y."/>
            <person name="Koide Y."/>
            <person name="Komori T."/>
            <person name="Koyama Y."/>
            <person name="Minetoki T."/>
            <person name="Suharnan S."/>
            <person name="Tanaka A."/>
            <person name="Isono K."/>
            <person name="Kuhara S."/>
            <person name="Ogasawara N."/>
            <person name="Kikuchi H."/>
        </authorList>
    </citation>
    <scope>NUCLEOTIDE SEQUENCE [LARGE SCALE GENOMIC DNA]</scope>
    <source>
        <strain>ATCC 42149 / RIB 40</strain>
    </source>
</reference>
<comment type="function">
    <text evidence="1">Alpha-1,2-mannosyltransferase involved in glycosylphosphatidylinositol-anchor biosynthesis. Transfers a fourth mannose to trimannosyl-GPIs during GPI precursor assembly. The presence of a fourth mannose in GPI is essential in fungi (By similarity).</text>
</comment>
<comment type="pathway">
    <text>Glycolipid biosynthesis; glycosylphosphatidylinositol-anchor biosynthesis.</text>
</comment>
<comment type="subcellular location">
    <subcellularLocation>
        <location evidence="1">Endoplasmic reticulum membrane</location>
        <topology evidence="1">Multi-pass membrane protein</topology>
    </subcellularLocation>
</comment>
<comment type="similarity">
    <text evidence="3">Belongs to the glycosyltransferase 22 family. PIGZ subfamily.</text>
</comment>
<name>SMP3_ASPOR</name>
<protein>
    <recommendedName>
        <fullName>GPI mannosyltransferase 4</fullName>
        <ecNumber>2.4.1.-</ecNumber>
    </recommendedName>
    <alternativeName>
        <fullName>GPI mannosyltransferase IV</fullName>
        <shortName>GPI-MT-IV</shortName>
    </alternativeName>
</protein>
<accession>Q2UTP0</accession>